<feature type="chain" id="PRO_1000147995" description="Probable glycine dehydrogenase (decarboxylating) subunit 2">
    <location>
        <begin position="1"/>
        <end position="491"/>
    </location>
</feature>
<feature type="modified residue" description="N6-(pyridoxal phosphate)lysine" evidence="1">
    <location>
        <position position="273"/>
    </location>
</feature>
<reference key="1">
    <citation type="submission" date="2009-04" db="EMBL/GenBank/DDBJ databases">
        <title>Genome sequence of Bacillus anthracis A0248.</title>
        <authorList>
            <person name="Dodson R.J."/>
            <person name="Munk A.C."/>
            <person name="Bruce D."/>
            <person name="Detter C."/>
            <person name="Tapia R."/>
            <person name="Sutton G."/>
            <person name="Sims D."/>
            <person name="Brettin T."/>
        </authorList>
    </citation>
    <scope>NUCLEOTIDE SEQUENCE [LARGE SCALE GENOMIC DNA]</scope>
    <source>
        <strain>A0248</strain>
    </source>
</reference>
<organism>
    <name type="scientific">Bacillus anthracis (strain A0248)</name>
    <dbReference type="NCBI Taxonomy" id="592021"/>
    <lineage>
        <taxon>Bacteria</taxon>
        <taxon>Bacillati</taxon>
        <taxon>Bacillota</taxon>
        <taxon>Bacilli</taxon>
        <taxon>Bacillales</taxon>
        <taxon>Bacillaceae</taxon>
        <taxon>Bacillus</taxon>
        <taxon>Bacillus cereus group</taxon>
    </lineage>
</organism>
<evidence type="ECO:0000255" key="1">
    <source>
        <dbReference type="HAMAP-Rule" id="MF_00713"/>
    </source>
</evidence>
<sequence>MKNQDQALIFEVSKEGRIGYSLPKLDVEEVKLEDVFESDYIRVEDAELPEVSELDIMRHYTALSNRNHGVDSGFYPLGSCTMKYNPKINESVARFAGFANIHPLQDEKTVQGAMELMYDLQEHLIEITGMDTVTLQPAAGAHGEWTGLMLIRAYHEANGDFNRTKVIVPDSAHGTNPASATVAGFETITVKSNEHGLVDLEDLKRVVNEETAALMLTNPNTLGLFEENILEMAEIVHNAGGKLYYDGANLNAVLSQARPGDMGFDVVHLNLHKTFTGPHGGGGPGSGPVGVKADLIPYLPKPILEKTENGYHFNYDRPEAIGRVKPFYGNFGINVRAYTYIRSMGPDGLRAVTEYAVLNANYMMRRLAPFYDLPFDRHCKHEFVLSGRRQKKLGVRTLDIAKRLLDFGYHPPTIYFPLNVEECIMIEPTETESKETLDGFIDKMIQIAKEVEENPEVVQEAPHTTVIKRLDETMAARKPVLRYAKPAPVQV</sequence>
<dbReference type="EC" id="1.4.4.2" evidence="1"/>
<dbReference type="EMBL" id="CP001598">
    <property type="protein sequence ID" value="ACQ48001.1"/>
    <property type="molecule type" value="Genomic_DNA"/>
</dbReference>
<dbReference type="RefSeq" id="WP_000795698.1">
    <property type="nucleotide sequence ID" value="NC_012659.1"/>
</dbReference>
<dbReference type="SMR" id="C3P8D3"/>
<dbReference type="GeneID" id="93006875"/>
<dbReference type="KEGG" id="bai:BAA_4465"/>
<dbReference type="HOGENOM" id="CLU_004620_5_0_9"/>
<dbReference type="GO" id="GO:0005829">
    <property type="term" value="C:cytosol"/>
    <property type="evidence" value="ECO:0007669"/>
    <property type="project" value="TreeGrafter"/>
</dbReference>
<dbReference type="GO" id="GO:0005960">
    <property type="term" value="C:glycine cleavage complex"/>
    <property type="evidence" value="ECO:0007669"/>
    <property type="project" value="TreeGrafter"/>
</dbReference>
<dbReference type="GO" id="GO:0016594">
    <property type="term" value="F:glycine binding"/>
    <property type="evidence" value="ECO:0007669"/>
    <property type="project" value="TreeGrafter"/>
</dbReference>
<dbReference type="GO" id="GO:0004375">
    <property type="term" value="F:glycine dehydrogenase (decarboxylating) activity"/>
    <property type="evidence" value="ECO:0007669"/>
    <property type="project" value="UniProtKB-EC"/>
</dbReference>
<dbReference type="GO" id="GO:0030170">
    <property type="term" value="F:pyridoxal phosphate binding"/>
    <property type="evidence" value="ECO:0007669"/>
    <property type="project" value="TreeGrafter"/>
</dbReference>
<dbReference type="GO" id="GO:0019464">
    <property type="term" value="P:glycine decarboxylation via glycine cleavage system"/>
    <property type="evidence" value="ECO:0007669"/>
    <property type="project" value="UniProtKB-UniRule"/>
</dbReference>
<dbReference type="CDD" id="cd00613">
    <property type="entry name" value="GDC-P"/>
    <property type="match status" value="1"/>
</dbReference>
<dbReference type="FunFam" id="3.40.640.10:FF:000034">
    <property type="entry name" value="Probable glycine dehydrogenase (decarboxylating) subunit 2"/>
    <property type="match status" value="1"/>
</dbReference>
<dbReference type="FunFam" id="3.90.1150.10:FF:000014">
    <property type="entry name" value="Probable glycine dehydrogenase (decarboxylating) subunit 2"/>
    <property type="match status" value="1"/>
</dbReference>
<dbReference type="Gene3D" id="6.20.440.10">
    <property type="match status" value="1"/>
</dbReference>
<dbReference type="Gene3D" id="3.90.1150.10">
    <property type="entry name" value="Aspartate Aminotransferase, domain 1"/>
    <property type="match status" value="1"/>
</dbReference>
<dbReference type="Gene3D" id="3.40.640.10">
    <property type="entry name" value="Type I PLP-dependent aspartate aminotransferase-like (Major domain)"/>
    <property type="match status" value="1"/>
</dbReference>
<dbReference type="HAMAP" id="MF_00713">
    <property type="entry name" value="GcvPB"/>
    <property type="match status" value="1"/>
</dbReference>
<dbReference type="InterPro" id="IPR023012">
    <property type="entry name" value="GcvPB"/>
</dbReference>
<dbReference type="InterPro" id="IPR049316">
    <property type="entry name" value="GDC-P_C"/>
</dbReference>
<dbReference type="InterPro" id="IPR049315">
    <property type="entry name" value="GDC-P_N"/>
</dbReference>
<dbReference type="InterPro" id="IPR020581">
    <property type="entry name" value="GDC_P"/>
</dbReference>
<dbReference type="InterPro" id="IPR015424">
    <property type="entry name" value="PyrdxlP-dep_Trfase"/>
</dbReference>
<dbReference type="InterPro" id="IPR015421">
    <property type="entry name" value="PyrdxlP-dep_Trfase_major"/>
</dbReference>
<dbReference type="InterPro" id="IPR015422">
    <property type="entry name" value="PyrdxlP-dep_Trfase_small"/>
</dbReference>
<dbReference type="NCBIfam" id="NF003346">
    <property type="entry name" value="PRK04366.1"/>
    <property type="match status" value="1"/>
</dbReference>
<dbReference type="PANTHER" id="PTHR11773:SF1">
    <property type="entry name" value="GLYCINE DEHYDROGENASE (DECARBOXYLATING), MITOCHONDRIAL"/>
    <property type="match status" value="1"/>
</dbReference>
<dbReference type="PANTHER" id="PTHR11773">
    <property type="entry name" value="GLYCINE DEHYDROGENASE, DECARBOXYLATING"/>
    <property type="match status" value="1"/>
</dbReference>
<dbReference type="Pfam" id="PF21478">
    <property type="entry name" value="GcvP2_C"/>
    <property type="match status" value="1"/>
</dbReference>
<dbReference type="Pfam" id="PF02347">
    <property type="entry name" value="GDC-P"/>
    <property type="match status" value="1"/>
</dbReference>
<dbReference type="SUPFAM" id="SSF53383">
    <property type="entry name" value="PLP-dependent transferases"/>
    <property type="match status" value="1"/>
</dbReference>
<accession>C3P8D3</accession>
<comment type="function">
    <text evidence="1">The glycine cleavage system catalyzes the degradation of glycine. The P protein binds the alpha-amino group of glycine through its pyridoxal phosphate cofactor; CO(2) is released and the remaining methylamine moiety is then transferred to the lipoamide cofactor of the H protein.</text>
</comment>
<comment type="catalytic activity">
    <reaction evidence="1">
        <text>N(6)-[(R)-lipoyl]-L-lysyl-[glycine-cleavage complex H protein] + glycine + H(+) = N(6)-[(R)-S(8)-aminomethyldihydrolipoyl]-L-lysyl-[glycine-cleavage complex H protein] + CO2</text>
        <dbReference type="Rhea" id="RHEA:24304"/>
        <dbReference type="Rhea" id="RHEA-COMP:10494"/>
        <dbReference type="Rhea" id="RHEA-COMP:10495"/>
        <dbReference type="ChEBI" id="CHEBI:15378"/>
        <dbReference type="ChEBI" id="CHEBI:16526"/>
        <dbReference type="ChEBI" id="CHEBI:57305"/>
        <dbReference type="ChEBI" id="CHEBI:83099"/>
        <dbReference type="ChEBI" id="CHEBI:83143"/>
        <dbReference type="EC" id="1.4.4.2"/>
    </reaction>
</comment>
<comment type="cofactor">
    <cofactor evidence="1">
        <name>pyridoxal 5'-phosphate</name>
        <dbReference type="ChEBI" id="CHEBI:597326"/>
    </cofactor>
</comment>
<comment type="subunit">
    <text evidence="1">The glycine cleavage system is composed of four proteins: P, T, L and H. In this organism, the P 'protein' is a heterodimer of two subunits.</text>
</comment>
<comment type="similarity">
    <text evidence="1">Belongs to the GcvP family. C-terminal subunit subfamily.</text>
</comment>
<proteinExistence type="inferred from homology"/>
<gene>
    <name evidence="1" type="primary">gcvPB</name>
    <name type="ordered locus">BAA_4465</name>
</gene>
<keyword id="KW-0560">Oxidoreductase</keyword>
<keyword id="KW-0663">Pyridoxal phosphate</keyword>
<name>GCSPB_BACAA</name>
<protein>
    <recommendedName>
        <fullName evidence="1">Probable glycine dehydrogenase (decarboxylating) subunit 2</fullName>
        <ecNumber evidence="1">1.4.4.2</ecNumber>
    </recommendedName>
    <alternativeName>
        <fullName evidence="1">Glycine cleavage system P-protein subunit 2</fullName>
    </alternativeName>
    <alternativeName>
        <fullName evidence="1">Glycine decarboxylase subunit 2</fullName>
    </alternativeName>
    <alternativeName>
        <fullName evidence="1">Glycine dehydrogenase (aminomethyl-transferring) subunit 2</fullName>
    </alternativeName>
</protein>